<organism>
    <name type="scientific">Legionella pneumophila (strain Corby)</name>
    <dbReference type="NCBI Taxonomy" id="400673"/>
    <lineage>
        <taxon>Bacteria</taxon>
        <taxon>Pseudomonadati</taxon>
        <taxon>Pseudomonadota</taxon>
        <taxon>Gammaproteobacteria</taxon>
        <taxon>Legionellales</taxon>
        <taxon>Legionellaceae</taxon>
        <taxon>Legionella</taxon>
    </lineage>
</organism>
<evidence type="ECO:0000255" key="1">
    <source>
        <dbReference type="HAMAP-Rule" id="MF_00056"/>
    </source>
</evidence>
<keyword id="KW-0963">Cytoplasm</keyword>
<keyword id="KW-0448">Lipopolysaccharide biosynthesis</keyword>
<keyword id="KW-0808">Transferase</keyword>
<sequence>MRLCGFEAGLDKPLFLIAGPCVIESEELALETAGYLKEMCSQLNIPFIYKSSFDKANRSSISSYRGPGFEKGLSILEKVKSQIGVPVLTDVHEDTPLFEVSSVVDVLQTPAFLCRQTNFIQKVAAMNKPVNIKKGQFLAPWEMKHVIAKAKAQGNEQIMACERGVSFGYNNLVSDMRSLVIMRETGCPVVYDATHSVQLPGGNNGVSGGQREFIPALARAAVAVGISGLFMETHPDPDKALSDGPNSWPLDKMKQLLESLKAADEVYKKYSTDF</sequence>
<reference key="1">
    <citation type="submission" date="2006-11" db="EMBL/GenBank/DDBJ databases">
        <title>Identification and characterization of a new conjugation/ type IVA secretion system (trb/tra) of L. pneumophila Corby localized on a mobile genomic island.</title>
        <authorList>
            <person name="Gloeckner G."/>
            <person name="Albert-Weissenberger C."/>
            <person name="Weinmann E."/>
            <person name="Jacobi S."/>
            <person name="Schunder E."/>
            <person name="Steinert M."/>
            <person name="Buchrieser C."/>
            <person name="Hacker J."/>
            <person name="Heuner K."/>
        </authorList>
    </citation>
    <scope>NUCLEOTIDE SEQUENCE [LARGE SCALE GENOMIC DNA]</scope>
    <source>
        <strain>Corby</strain>
    </source>
</reference>
<proteinExistence type="inferred from homology"/>
<accession>A5IB80</accession>
<feature type="chain" id="PRO_1000003339" description="2-dehydro-3-deoxyphosphooctonate aldolase">
    <location>
        <begin position="1"/>
        <end position="274"/>
    </location>
</feature>
<gene>
    <name evidence="1" type="primary">kdsA</name>
    <name type="ordered locus">LPC_0649</name>
</gene>
<comment type="catalytic activity">
    <reaction evidence="1">
        <text>D-arabinose 5-phosphate + phosphoenolpyruvate + H2O = 3-deoxy-alpha-D-manno-2-octulosonate-8-phosphate + phosphate</text>
        <dbReference type="Rhea" id="RHEA:14053"/>
        <dbReference type="ChEBI" id="CHEBI:15377"/>
        <dbReference type="ChEBI" id="CHEBI:43474"/>
        <dbReference type="ChEBI" id="CHEBI:57693"/>
        <dbReference type="ChEBI" id="CHEBI:58702"/>
        <dbReference type="ChEBI" id="CHEBI:85985"/>
        <dbReference type="EC" id="2.5.1.55"/>
    </reaction>
</comment>
<comment type="pathway">
    <text evidence="1">Carbohydrate biosynthesis; 3-deoxy-D-manno-octulosonate biosynthesis; 3-deoxy-D-manno-octulosonate from D-ribulose 5-phosphate: step 2/3.</text>
</comment>
<comment type="pathway">
    <text evidence="1">Bacterial outer membrane biogenesis; lipopolysaccharide biosynthesis.</text>
</comment>
<comment type="subcellular location">
    <subcellularLocation>
        <location evidence="1">Cytoplasm</location>
    </subcellularLocation>
</comment>
<comment type="similarity">
    <text evidence="1">Belongs to the KdsA family.</text>
</comment>
<protein>
    <recommendedName>
        <fullName evidence="1">2-dehydro-3-deoxyphosphooctonate aldolase</fullName>
        <ecNumber evidence="1">2.5.1.55</ecNumber>
    </recommendedName>
    <alternativeName>
        <fullName evidence="1">3-deoxy-D-manno-octulosonic acid 8-phosphate synthase</fullName>
    </alternativeName>
    <alternativeName>
        <fullName evidence="1">KDO-8-phosphate synthase</fullName>
        <shortName evidence="1">KDO 8-P synthase</shortName>
        <shortName evidence="1">KDOPS</shortName>
    </alternativeName>
    <alternativeName>
        <fullName evidence="1">Phospho-2-dehydro-3-deoxyoctonate aldolase</fullName>
    </alternativeName>
</protein>
<dbReference type="EC" id="2.5.1.55" evidence="1"/>
<dbReference type="EMBL" id="CP000675">
    <property type="protein sequence ID" value="ABQ54630.1"/>
    <property type="molecule type" value="Genomic_DNA"/>
</dbReference>
<dbReference type="RefSeq" id="WP_010946916.1">
    <property type="nucleotide sequence ID" value="NZ_JAPMSS010000002.1"/>
</dbReference>
<dbReference type="SMR" id="A5IB80"/>
<dbReference type="GeneID" id="57035172"/>
<dbReference type="KEGG" id="lpc:LPC_0649"/>
<dbReference type="HOGENOM" id="CLU_036666_0_0_6"/>
<dbReference type="UniPathway" id="UPA00030"/>
<dbReference type="UniPathway" id="UPA00357">
    <property type="reaction ID" value="UER00474"/>
</dbReference>
<dbReference type="GO" id="GO:0005737">
    <property type="term" value="C:cytoplasm"/>
    <property type="evidence" value="ECO:0007669"/>
    <property type="project" value="UniProtKB-SubCell"/>
</dbReference>
<dbReference type="GO" id="GO:0008676">
    <property type="term" value="F:3-deoxy-8-phosphooctulonate synthase activity"/>
    <property type="evidence" value="ECO:0007669"/>
    <property type="project" value="UniProtKB-UniRule"/>
</dbReference>
<dbReference type="GO" id="GO:0019294">
    <property type="term" value="P:keto-3-deoxy-D-manno-octulosonic acid biosynthetic process"/>
    <property type="evidence" value="ECO:0007669"/>
    <property type="project" value="UniProtKB-UniRule"/>
</dbReference>
<dbReference type="Gene3D" id="3.20.20.70">
    <property type="entry name" value="Aldolase class I"/>
    <property type="match status" value="1"/>
</dbReference>
<dbReference type="HAMAP" id="MF_00056">
    <property type="entry name" value="KDO8P_synth"/>
    <property type="match status" value="1"/>
</dbReference>
<dbReference type="InterPro" id="IPR013785">
    <property type="entry name" value="Aldolase_TIM"/>
</dbReference>
<dbReference type="InterPro" id="IPR006218">
    <property type="entry name" value="DAHP1/KDSA"/>
</dbReference>
<dbReference type="InterPro" id="IPR006269">
    <property type="entry name" value="KDO8P_synthase"/>
</dbReference>
<dbReference type="NCBIfam" id="TIGR01362">
    <property type="entry name" value="KDO8P_synth"/>
    <property type="match status" value="1"/>
</dbReference>
<dbReference type="NCBIfam" id="NF003543">
    <property type="entry name" value="PRK05198.1"/>
    <property type="match status" value="1"/>
</dbReference>
<dbReference type="PANTHER" id="PTHR21057">
    <property type="entry name" value="PHOSPHO-2-DEHYDRO-3-DEOXYHEPTONATE ALDOLASE"/>
    <property type="match status" value="1"/>
</dbReference>
<dbReference type="Pfam" id="PF00793">
    <property type="entry name" value="DAHP_synth_1"/>
    <property type="match status" value="1"/>
</dbReference>
<dbReference type="SUPFAM" id="SSF51569">
    <property type="entry name" value="Aldolase"/>
    <property type="match status" value="1"/>
</dbReference>
<name>KDSA_LEGPC</name>